<name>YOZK_BACSU</name>
<accession>O31841</accession>
<reference key="1">
    <citation type="journal article" date="1997" name="Nature">
        <title>The complete genome sequence of the Gram-positive bacterium Bacillus subtilis.</title>
        <authorList>
            <person name="Kunst F."/>
            <person name="Ogasawara N."/>
            <person name="Moszer I."/>
            <person name="Albertini A.M."/>
            <person name="Alloni G."/>
            <person name="Azevedo V."/>
            <person name="Bertero M.G."/>
            <person name="Bessieres P."/>
            <person name="Bolotin A."/>
            <person name="Borchert S."/>
            <person name="Borriss R."/>
            <person name="Boursier L."/>
            <person name="Brans A."/>
            <person name="Braun M."/>
            <person name="Brignell S.C."/>
            <person name="Bron S."/>
            <person name="Brouillet S."/>
            <person name="Bruschi C.V."/>
            <person name="Caldwell B."/>
            <person name="Capuano V."/>
            <person name="Carter N.M."/>
            <person name="Choi S.-K."/>
            <person name="Codani J.-J."/>
            <person name="Connerton I.F."/>
            <person name="Cummings N.J."/>
            <person name="Daniel R.A."/>
            <person name="Denizot F."/>
            <person name="Devine K.M."/>
            <person name="Duesterhoeft A."/>
            <person name="Ehrlich S.D."/>
            <person name="Emmerson P.T."/>
            <person name="Entian K.-D."/>
            <person name="Errington J."/>
            <person name="Fabret C."/>
            <person name="Ferrari E."/>
            <person name="Foulger D."/>
            <person name="Fritz C."/>
            <person name="Fujita M."/>
            <person name="Fujita Y."/>
            <person name="Fuma S."/>
            <person name="Galizzi A."/>
            <person name="Galleron N."/>
            <person name="Ghim S.-Y."/>
            <person name="Glaser P."/>
            <person name="Goffeau A."/>
            <person name="Golightly E.J."/>
            <person name="Grandi G."/>
            <person name="Guiseppi G."/>
            <person name="Guy B.J."/>
            <person name="Haga K."/>
            <person name="Haiech J."/>
            <person name="Harwood C.R."/>
            <person name="Henaut A."/>
            <person name="Hilbert H."/>
            <person name="Holsappel S."/>
            <person name="Hosono S."/>
            <person name="Hullo M.-F."/>
            <person name="Itaya M."/>
            <person name="Jones L.-M."/>
            <person name="Joris B."/>
            <person name="Karamata D."/>
            <person name="Kasahara Y."/>
            <person name="Klaerr-Blanchard M."/>
            <person name="Klein C."/>
            <person name="Kobayashi Y."/>
            <person name="Koetter P."/>
            <person name="Koningstein G."/>
            <person name="Krogh S."/>
            <person name="Kumano M."/>
            <person name="Kurita K."/>
            <person name="Lapidus A."/>
            <person name="Lardinois S."/>
            <person name="Lauber J."/>
            <person name="Lazarevic V."/>
            <person name="Lee S.-M."/>
            <person name="Levine A."/>
            <person name="Liu H."/>
            <person name="Masuda S."/>
            <person name="Mauel C."/>
            <person name="Medigue C."/>
            <person name="Medina N."/>
            <person name="Mellado R.P."/>
            <person name="Mizuno M."/>
            <person name="Moestl D."/>
            <person name="Nakai S."/>
            <person name="Noback M."/>
            <person name="Noone D."/>
            <person name="O'Reilly M."/>
            <person name="Ogawa K."/>
            <person name="Ogiwara A."/>
            <person name="Oudega B."/>
            <person name="Park S.-H."/>
            <person name="Parro V."/>
            <person name="Pohl T.M."/>
            <person name="Portetelle D."/>
            <person name="Porwollik S."/>
            <person name="Prescott A.M."/>
            <person name="Presecan E."/>
            <person name="Pujic P."/>
            <person name="Purnelle B."/>
            <person name="Rapoport G."/>
            <person name="Rey M."/>
            <person name="Reynolds S."/>
            <person name="Rieger M."/>
            <person name="Rivolta C."/>
            <person name="Rocha E."/>
            <person name="Roche B."/>
            <person name="Rose M."/>
            <person name="Sadaie Y."/>
            <person name="Sato T."/>
            <person name="Scanlan E."/>
            <person name="Schleich S."/>
            <person name="Schroeter R."/>
            <person name="Scoffone F."/>
            <person name="Sekiguchi J."/>
            <person name="Sekowska A."/>
            <person name="Seror S.J."/>
            <person name="Serror P."/>
            <person name="Shin B.-S."/>
            <person name="Soldo B."/>
            <person name="Sorokin A."/>
            <person name="Tacconi E."/>
            <person name="Takagi T."/>
            <person name="Takahashi H."/>
            <person name="Takemaru K."/>
            <person name="Takeuchi M."/>
            <person name="Tamakoshi A."/>
            <person name="Tanaka T."/>
            <person name="Terpstra P."/>
            <person name="Tognoni A."/>
            <person name="Tosato V."/>
            <person name="Uchiyama S."/>
            <person name="Vandenbol M."/>
            <person name="Vannier F."/>
            <person name="Vassarotti A."/>
            <person name="Viari A."/>
            <person name="Wambutt R."/>
            <person name="Wedler E."/>
            <person name="Wedler H."/>
            <person name="Weitzenegger T."/>
            <person name="Winters P."/>
            <person name="Wipat A."/>
            <person name="Yamamoto H."/>
            <person name="Yamane K."/>
            <person name="Yasumoto K."/>
            <person name="Yata K."/>
            <person name="Yoshida K."/>
            <person name="Yoshikawa H.-F."/>
            <person name="Zumstein E."/>
            <person name="Yoshikawa H."/>
            <person name="Danchin A."/>
        </authorList>
    </citation>
    <scope>NUCLEOTIDE SEQUENCE [LARGE SCALE GENOMIC DNA]</scope>
    <source>
        <strain>168</strain>
    </source>
</reference>
<keyword id="KW-0460">Magnesium</keyword>
<keyword id="KW-0479">Metal-binding</keyword>
<keyword id="KW-1185">Reference proteome</keyword>
<sequence length="115" mass="12978">MTDYSQFPRENILCVDMKSFYASVSAVAMGLNPLTCYLAVVGNTDRQGSVVLAASPALKKDFGIKTGSRLFEIPEDPRIYIVNPQMKLFIRVSTEITKLFYRFVPEKCVHTYSID</sequence>
<proteinExistence type="uncertain"/>
<feature type="chain" id="PRO_0000382684" description="DNA repair protein homolog YozK">
    <location>
        <begin position="1"/>
        <end position="115"/>
    </location>
</feature>
<feature type="domain" description="UmuC" evidence="2">
    <location>
        <begin position="12"/>
        <end position="115"/>
    </location>
</feature>
<feature type="binding site" evidence="2">
    <location>
        <position position="16"/>
    </location>
    <ligand>
        <name>Mg(2+)</name>
        <dbReference type="ChEBI" id="CHEBI:18420"/>
    </ligand>
</feature>
<feature type="binding site" evidence="2">
    <location>
        <position position="115"/>
    </location>
    <ligand>
        <name>Mg(2+)</name>
        <dbReference type="ChEBI" id="CHEBI:18420"/>
    </ligand>
</feature>
<protein>
    <recommendedName>
        <fullName>DNA repair protein homolog YozK</fullName>
    </recommendedName>
</protein>
<gene>
    <name type="primary">yozK</name>
    <name type="ordered locus">BSU18940</name>
</gene>
<dbReference type="EMBL" id="AL009126">
    <property type="protein sequence ID" value="CAB13786.1"/>
    <property type="molecule type" value="Genomic_DNA"/>
</dbReference>
<dbReference type="PIR" id="G69931">
    <property type="entry name" value="G69931"/>
</dbReference>
<dbReference type="RefSeq" id="NP_389775.1">
    <property type="nucleotide sequence ID" value="NC_000964.3"/>
</dbReference>
<dbReference type="SMR" id="O31841"/>
<dbReference type="FunCoup" id="O31841">
    <property type="interactions" value="53"/>
</dbReference>
<dbReference type="STRING" id="224308.BSU18940"/>
<dbReference type="PaxDb" id="224308-BSU18940"/>
<dbReference type="KEGG" id="bsu:BSU18940"/>
<dbReference type="PATRIC" id="fig|224308.179.peg.2071"/>
<dbReference type="eggNOG" id="COG0389">
    <property type="taxonomic scope" value="Bacteria"/>
</dbReference>
<dbReference type="InParanoid" id="O31841"/>
<dbReference type="BioCyc" id="BSUB:BSU18940-MONOMER"/>
<dbReference type="Proteomes" id="UP000001570">
    <property type="component" value="Chromosome"/>
</dbReference>
<dbReference type="GO" id="GO:0046872">
    <property type="term" value="F:metal ion binding"/>
    <property type="evidence" value="ECO:0007669"/>
    <property type="project" value="UniProtKB-KW"/>
</dbReference>
<dbReference type="GO" id="GO:0006281">
    <property type="term" value="P:DNA repair"/>
    <property type="evidence" value="ECO:0007669"/>
    <property type="project" value="InterPro"/>
</dbReference>
<dbReference type="Gene3D" id="3.30.70.270">
    <property type="match status" value="1"/>
</dbReference>
<dbReference type="Gene3D" id="3.40.1170.60">
    <property type="match status" value="1"/>
</dbReference>
<dbReference type="InterPro" id="IPR043502">
    <property type="entry name" value="DNA/RNA_pol_sf"/>
</dbReference>
<dbReference type="InterPro" id="IPR043128">
    <property type="entry name" value="Rev_trsase/Diguanyl_cyclase"/>
</dbReference>
<dbReference type="InterPro" id="IPR001126">
    <property type="entry name" value="UmuC"/>
</dbReference>
<dbReference type="Pfam" id="PF00817">
    <property type="entry name" value="IMS"/>
    <property type="match status" value="1"/>
</dbReference>
<dbReference type="SUPFAM" id="SSF56672">
    <property type="entry name" value="DNA/RNA polymerases"/>
    <property type="match status" value="1"/>
</dbReference>
<dbReference type="PROSITE" id="PS50173">
    <property type="entry name" value="UMUC"/>
    <property type="match status" value="1"/>
</dbReference>
<comment type="cofactor">
    <cofactor evidence="1">
        <name>Mg(2+)</name>
        <dbReference type="ChEBI" id="CHEBI:18420"/>
    </cofactor>
    <text evidence="1">Binds 2 magnesium ions per subunit.</text>
</comment>
<comment type="similarity">
    <text evidence="3">Belongs to the DNA polymerase type-Y family.</text>
</comment>
<comment type="caution">
    <text evidence="3">Could be the product of a pseudogene. This sequence is shorter than orthologs and lacks the conserved active site Glu.</text>
</comment>
<organism>
    <name type="scientific">Bacillus subtilis (strain 168)</name>
    <dbReference type="NCBI Taxonomy" id="224308"/>
    <lineage>
        <taxon>Bacteria</taxon>
        <taxon>Bacillati</taxon>
        <taxon>Bacillota</taxon>
        <taxon>Bacilli</taxon>
        <taxon>Bacillales</taxon>
        <taxon>Bacillaceae</taxon>
        <taxon>Bacillus</taxon>
    </lineage>
</organism>
<evidence type="ECO:0000250" key="1"/>
<evidence type="ECO:0000255" key="2">
    <source>
        <dbReference type="PROSITE-ProRule" id="PRU00216"/>
    </source>
</evidence>
<evidence type="ECO:0000305" key="3"/>